<name>NUSG_STRPQ</name>
<comment type="function">
    <text evidence="1">Participates in transcription elongation, termination and antitermination.</text>
</comment>
<comment type="similarity">
    <text evidence="1">Belongs to the NusG family.</text>
</comment>
<comment type="sequence caution" evidence="2">
    <conflict type="erroneous initiation">
        <sequence resource="EMBL-CDS" id="BAC63224"/>
    </conflict>
</comment>
<evidence type="ECO:0000255" key="1">
    <source>
        <dbReference type="HAMAP-Rule" id="MF_00948"/>
    </source>
</evidence>
<evidence type="ECO:0000305" key="2"/>
<sequence>MLDSFDKGWFVLQTYSGYENKVKENLLQRAQTYNMLDNILRVEIPTQTVNVEKNGQTKEIEENRFPGYVLVEMVMTDEAWFVVRNTPNVTGFVGSHGNRSKPTPLLEEEIRAILLSMGQTIDVFDTNIKEGDVVQIIDGAFMGQEGRVVEIENNKVKLMLNMFGSETVAEVELYQIAEL</sequence>
<organism>
    <name type="scientific">Streptococcus pyogenes serotype M3 (strain SSI-1)</name>
    <dbReference type="NCBI Taxonomy" id="193567"/>
    <lineage>
        <taxon>Bacteria</taxon>
        <taxon>Bacillati</taxon>
        <taxon>Bacillota</taxon>
        <taxon>Bacilli</taxon>
        <taxon>Lactobacillales</taxon>
        <taxon>Streptococcaceae</taxon>
        <taxon>Streptococcus</taxon>
    </lineage>
</organism>
<proteinExistence type="inferred from homology"/>
<protein>
    <recommendedName>
        <fullName evidence="1">Transcription termination/antitermination protein NusG</fullName>
    </recommendedName>
</protein>
<keyword id="KW-0804">Transcription</keyword>
<keyword id="KW-0889">Transcription antitermination</keyword>
<keyword id="KW-0805">Transcription regulation</keyword>
<keyword id="KW-0806">Transcription termination</keyword>
<reference key="1">
    <citation type="journal article" date="2003" name="Genome Res.">
        <title>Genome sequence of an M3 strain of Streptococcus pyogenes reveals a large-scale genomic rearrangement in invasive strains and new insights into phage evolution.</title>
        <authorList>
            <person name="Nakagawa I."/>
            <person name="Kurokawa K."/>
            <person name="Yamashita A."/>
            <person name="Nakata M."/>
            <person name="Tomiyasu Y."/>
            <person name="Okahashi N."/>
            <person name="Kawabata S."/>
            <person name="Yamazaki K."/>
            <person name="Shiba T."/>
            <person name="Yasunaga T."/>
            <person name="Hayashi H."/>
            <person name="Hattori M."/>
            <person name="Hamada S."/>
        </authorList>
    </citation>
    <scope>NUCLEOTIDE SEQUENCE [LARGE SCALE GENOMIC DNA]</scope>
    <source>
        <strain>SSI-1</strain>
    </source>
</reference>
<dbReference type="EMBL" id="BA000034">
    <property type="protein sequence ID" value="BAC63224.1"/>
    <property type="status" value="ALT_INIT"/>
    <property type="molecule type" value="Genomic_DNA"/>
</dbReference>
<dbReference type="RefSeq" id="WP_002987881.1">
    <property type="nucleotide sequence ID" value="NC_004606.1"/>
</dbReference>
<dbReference type="SMR" id="P0DC79"/>
<dbReference type="GeneID" id="83689799"/>
<dbReference type="KEGG" id="sps:SPs0129"/>
<dbReference type="HOGENOM" id="CLU_067287_1_1_9"/>
<dbReference type="GO" id="GO:0005829">
    <property type="term" value="C:cytosol"/>
    <property type="evidence" value="ECO:0007669"/>
    <property type="project" value="TreeGrafter"/>
</dbReference>
<dbReference type="GO" id="GO:0006353">
    <property type="term" value="P:DNA-templated transcription termination"/>
    <property type="evidence" value="ECO:0007669"/>
    <property type="project" value="UniProtKB-UniRule"/>
</dbReference>
<dbReference type="GO" id="GO:0032784">
    <property type="term" value="P:regulation of DNA-templated transcription elongation"/>
    <property type="evidence" value="ECO:0007669"/>
    <property type="project" value="InterPro"/>
</dbReference>
<dbReference type="GO" id="GO:0031564">
    <property type="term" value="P:transcription antitermination"/>
    <property type="evidence" value="ECO:0007669"/>
    <property type="project" value="UniProtKB-UniRule"/>
</dbReference>
<dbReference type="GO" id="GO:0140673">
    <property type="term" value="P:transcription elongation-coupled chromatin remodeling"/>
    <property type="evidence" value="ECO:0007669"/>
    <property type="project" value="InterPro"/>
</dbReference>
<dbReference type="CDD" id="cd06091">
    <property type="entry name" value="KOW_NusG"/>
    <property type="match status" value="1"/>
</dbReference>
<dbReference type="CDD" id="cd09891">
    <property type="entry name" value="NGN_Bact_1"/>
    <property type="match status" value="1"/>
</dbReference>
<dbReference type="FunFam" id="3.30.70.940:FF:000002">
    <property type="entry name" value="Transcription termination/antitermination protein NusG"/>
    <property type="match status" value="1"/>
</dbReference>
<dbReference type="Gene3D" id="2.30.30.30">
    <property type="match status" value="1"/>
</dbReference>
<dbReference type="Gene3D" id="3.30.70.940">
    <property type="entry name" value="NusG, N-terminal domain"/>
    <property type="match status" value="1"/>
</dbReference>
<dbReference type="HAMAP" id="MF_00948">
    <property type="entry name" value="NusG"/>
    <property type="match status" value="1"/>
</dbReference>
<dbReference type="InterPro" id="IPR005824">
    <property type="entry name" value="KOW"/>
</dbReference>
<dbReference type="InterPro" id="IPR047050">
    <property type="entry name" value="NGN"/>
</dbReference>
<dbReference type="InterPro" id="IPR006645">
    <property type="entry name" value="NGN-like_dom"/>
</dbReference>
<dbReference type="InterPro" id="IPR036735">
    <property type="entry name" value="NGN_dom_sf"/>
</dbReference>
<dbReference type="InterPro" id="IPR043425">
    <property type="entry name" value="NusG-like"/>
</dbReference>
<dbReference type="InterPro" id="IPR014722">
    <property type="entry name" value="Rib_uL2_dom2"/>
</dbReference>
<dbReference type="InterPro" id="IPR001062">
    <property type="entry name" value="Transcrpt_antiterm_NusG"/>
</dbReference>
<dbReference type="InterPro" id="IPR008991">
    <property type="entry name" value="Translation_prot_SH3-like_sf"/>
</dbReference>
<dbReference type="NCBIfam" id="TIGR00922">
    <property type="entry name" value="nusG"/>
    <property type="match status" value="1"/>
</dbReference>
<dbReference type="PANTHER" id="PTHR30265">
    <property type="entry name" value="RHO-INTERACTING TRANSCRIPTION TERMINATION FACTOR NUSG"/>
    <property type="match status" value="1"/>
</dbReference>
<dbReference type="PANTHER" id="PTHR30265:SF2">
    <property type="entry name" value="TRANSCRIPTION TERMINATION_ANTITERMINATION PROTEIN NUSG"/>
    <property type="match status" value="1"/>
</dbReference>
<dbReference type="Pfam" id="PF00467">
    <property type="entry name" value="KOW"/>
    <property type="match status" value="1"/>
</dbReference>
<dbReference type="Pfam" id="PF02357">
    <property type="entry name" value="NusG"/>
    <property type="match status" value="1"/>
</dbReference>
<dbReference type="PRINTS" id="PR00338">
    <property type="entry name" value="NUSGTNSCPFCT"/>
</dbReference>
<dbReference type="SMART" id="SM00739">
    <property type="entry name" value="KOW"/>
    <property type="match status" value="1"/>
</dbReference>
<dbReference type="SMART" id="SM00738">
    <property type="entry name" value="NGN"/>
    <property type="match status" value="1"/>
</dbReference>
<dbReference type="SUPFAM" id="SSF82679">
    <property type="entry name" value="N-utilization substance G protein NusG, N-terminal domain"/>
    <property type="match status" value="1"/>
</dbReference>
<dbReference type="SUPFAM" id="SSF50104">
    <property type="entry name" value="Translation proteins SH3-like domain"/>
    <property type="match status" value="1"/>
</dbReference>
<feature type="chain" id="PRO_0000411427" description="Transcription termination/antitermination protein NusG">
    <location>
        <begin position="1"/>
        <end position="179"/>
    </location>
</feature>
<feature type="domain" description="KOW" evidence="1">
    <location>
        <begin position="130"/>
        <end position="157"/>
    </location>
</feature>
<gene>
    <name evidence="1" type="primary">nusG</name>
    <name type="ordered locus">SPs0129</name>
</gene>
<accession>P0DC79</accession>
<accession>P68894</accession>
<accession>P82547</accession>